<proteinExistence type="inferred from homology"/>
<evidence type="ECO:0000255" key="1">
    <source>
        <dbReference type="HAMAP-Rule" id="MF_01336"/>
    </source>
</evidence>
<evidence type="ECO:0000305" key="2"/>
<protein>
    <recommendedName>
        <fullName evidence="1">Large ribosomal subunit protein bL25</fullName>
    </recommendedName>
    <alternativeName>
        <fullName evidence="2">50S ribosomal protein L25</fullName>
    </alternativeName>
</protein>
<dbReference type="EMBL" id="CP000687">
    <property type="protein sequence ID" value="ABY69096.1"/>
    <property type="molecule type" value="Genomic_DNA"/>
</dbReference>
<dbReference type="RefSeq" id="WP_005600595.1">
    <property type="nucleotide sequence ID" value="NC_010278.1"/>
</dbReference>
<dbReference type="SMR" id="B0BU91"/>
<dbReference type="KEGG" id="apj:APJL_0517"/>
<dbReference type="HOGENOM" id="CLU_137946_0_0_6"/>
<dbReference type="Proteomes" id="UP000008547">
    <property type="component" value="Chromosome"/>
</dbReference>
<dbReference type="GO" id="GO:0022625">
    <property type="term" value="C:cytosolic large ribosomal subunit"/>
    <property type="evidence" value="ECO:0007669"/>
    <property type="project" value="TreeGrafter"/>
</dbReference>
<dbReference type="GO" id="GO:0008097">
    <property type="term" value="F:5S rRNA binding"/>
    <property type="evidence" value="ECO:0007669"/>
    <property type="project" value="InterPro"/>
</dbReference>
<dbReference type="GO" id="GO:0003735">
    <property type="term" value="F:structural constituent of ribosome"/>
    <property type="evidence" value="ECO:0007669"/>
    <property type="project" value="InterPro"/>
</dbReference>
<dbReference type="GO" id="GO:0006412">
    <property type="term" value="P:translation"/>
    <property type="evidence" value="ECO:0007669"/>
    <property type="project" value="UniProtKB-UniRule"/>
</dbReference>
<dbReference type="CDD" id="cd00495">
    <property type="entry name" value="Ribosomal_L25_TL5_CTC"/>
    <property type="match status" value="1"/>
</dbReference>
<dbReference type="FunFam" id="2.40.240.10:FF:000002">
    <property type="entry name" value="50S ribosomal protein L25"/>
    <property type="match status" value="1"/>
</dbReference>
<dbReference type="Gene3D" id="2.40.240.10">
    <property type="entry name" value="Ribosomal Protein L25, Chain P"/>
    <property type="match status" value="1"/>
</dbReference>
<dbReference type="HAMAP" id="MF_01336">
    <property type="entry name" value="Ribosomal_bL25"/>
    <property type="match status" value="1"/>
</dbReference>
<dbReference type="InterPro" id="IPR020056">
    <property type="entry name" value="Rbsml_bL25/Gln-tRNA_synth_N"/>
</dbReference>
<dbReference type="InterPro" id="IPR011035">
    <property type="entry name" value="Ribosomal_bL25/Gln-tRNA_synth"/>
</dbReference>
<dbReference type="InterPro" id="IPR020055">
    <property type="entry name" value="Ribosomal_bL25_short"/>
</dbReference>
<dbReference type="InterPro" id="IPR029751">
    <property type="entry name" value="Ribosomal_L25_dom"/>
</dbReference>
<dbReference type="InterPro" id="IPR020930">
    <property type="entry name" value="Ribosomal_uL5_bac-type"/>
</dbReference>
<dbReference type="NCBIfam" id="NF004612">
    <property type="entry name" value="PRK05943.1"/>
    <property type="match status" value="1"/>
</dbReference>
<dbReference type="PANTHER" id="PTHR33284">
    <property type="entry name" value="RIBOSOMAL PROTEIN L25/GLN-TRNA SYNTHETASE, ANTI-CODON-BINDING DOMAIN-CONTAINING PROTEIN"/>
    <property type="match status" value="1"/>
</dbReference>
<dbReference type="PANTHER" id="PTHR33284:SF1">
    <property type="entry name" value="RIBOSOMAL PROTEIN L25_GLN-TRNA SYNTHETASE, ANTI-CODON-BINDING DOMAIN-CONTAINING PROTEIN"/>
    <property type="match status" value="1"/>
</dbReference>
<dbReference type="Pfam" id="PF01386">
    <property type="entry name" value="Ribosomal_L25p"/>
    <property type="match status" value="1"/>
</dbReference>
<dbReference type="SUPFAM" id="SSF50715">
    <property type="entry name" value="Ribosomal protein L25-like"/>
    <property type="match status" value="1"/>
</dbReference>
<sequence length="95" mass="10586">MSFKFEAEVRSAQGKGASRRLRHNGQVPAIIYGGNAEPVSIILDHDKVNNAQAHDAFYNEVLTIVVAGKEEQVKVQAIQRHPTKPKLVHLDFKRA</sequence>
<accession>B0BU91</accession>
<gene>
    <name evidence="1" type="primary">rplY</name>
    <name type="ordered locus">APJL_0517</name>
</gene>
<feature type="chain" id="PRO_1000142574" description="Large ribosomal subunit protein bL25">
    <location>
        <begin position="1"/>
        <end position="95"/>
    </location>
</feature>
<keyword id="KW-0687">Ribonucleoprotein</keyword>
<keyword id="KW-0689">Ribosomal protein</keyword>
<keyword id="KW-0694">RNA-binding</keyword>
<keyword id="KW-0699">rRNA-binding</keyword>
<name>RL25_ACTPJ</name>
<comment type="function">
    <text evidence="1">This is one of the proteins that binds to the 5S RNA in the ribosome where it forms part of the central protuberance.</text>
</comment>
<comment type="subunit">
    <text evidence="1">Part of the 50S ribosomal subunit; part of the 5S rRNA/L5/L18/L25 subcomplex. Contacts the 5S rRNA. Binds to the 5S rRNA independently of L5 and L18.</text>
</comment>
<comment type="similarity">
    <text evidence="1">Belongs to the bacterial ribosomal protein bL25 family.</text>
</comment>
<reference key="1">
    <citation type="journal article" date="2008" name="PLoS ONE">
        <title>Genome biology of Actinobacillus pleuropneumoniae JL03, an isolate of serotype 3 prevalent in China.</title>
        <authorList>
            <person name="Xu Z."/>
            <person name="Zhou Y."/>
            <person name="Li L."/>
            <person name="Zhou R."/>
            <person name="Xiao S."/>
            <person name="Wan Y."/>
            <person name="Zhang S."/>
            <person name="Wang K."/>
            <person name="Li W."/>
            <person name="Li L."/>
            <person name="Jin H."/>
            <person name="Kang M."/>
            <person name="Dalai B."/>
            <person name="Li T."/>
            <person name="Liu L."/>
            <person name="Cheng Y."/>
            <person name="Zhang L."/>
            <person name="Xu T."/>
            <person name="Zheng H."/>
            <person name="Pu S."/>
            <person name="Wang B."/>
            <person name="Gu W."/>
            <person name="Zhang X.L."/>
            <person name="Zhu G.-F."/>
            <person name="Wang S."/>
            <person name="Zhao G.-P."/>
            <person name="Chen H."/>
        </authorList>
    </citation>
    <scope>NUCLEOTIDE SEQUENCE [LARGE SCALE GENOMIC DNA]</scope>
    <source>
        <strain>JL03</strain>
    </source>
</reference>
<organism>
    <name type="scientific">Actinobacillus pleuropneumoniae serotype 3 (strain JL03)</name>
    <dbReference type="NCBI Taxonomy" id="434271"/>
    <lineage>
        <taxon>Bacteria</taxon>
        <taxon>Pseudomonadati</taxon>
        <taxon>Pseudomonadota</taxon>
        <taxon>Gammaproteobacteria</taxon>
        <taxon>Pasteurellales</taxon>
        <taxon>Pasteurellaceae</taxon>
        <taxon>Actinobacillus</taxon>
    </lineage>
</organism>